<protein>
    <recommendedName>
        <fullName>Autophagy-related protein 16</fullName>
    </recommendedName>
</protein>
<accession>A7TIN2</accession>
<reference key="1">
    <citation type="journal article" date="2007" name="Proc. Natl. Acad. Sci. U.S.A.">
        <title>Independent sorting-out of thousands of duplicated gene pairs in two yeast species descended from a whole-genome duplication.</title>
        <authorList>
            <person name="Scannell D.R."/>
            <person name="Frank A.C."/>
            <person name="Conant G.C."/>
            <person name="Byrne K.P."/>
            <person name="Woolfit M."/>
            <person name="Wolfe K.H."/>
        </authorList>
    </citation>
    <scope>NUCLEOTIDE SEQUENCE [LARGE SCALE GENOMIC DNA]</scope>
    <source>
        <strain>ATCC 22028 / DSM 70294 / BCRC 21397 / CBS 2163 / NBRC 10782 / NRRL Y-8283 / UCD 57-17</strain>
    </source>
</reference>
<dbReference type="EMBL" id="DS480397">
    <property type="protein sequence ID" value="EDO17824.1"/>
    <property type="molecule type" value="Genomic_DNA"/>
</dbReference>
<dbReference type="RefSeq" id="XP_001645682.1">
    <property type="nucleotide sequence ID" value="XM_001645632.1"/>
</dbReference>
<dbReference type="SMR" id="A7TIN2"/>
<dbReference type="FunCoup" id="A7TIN2">
    <property type="interactions" value="53"/>
</dbReference>
<dbReference type="STRING" id="436907.A7TIN2"/>
<dbReference type="GeneID" id="5546078"/>
<dbReference type="KEGG" id="vpo:Kpol_1043p14"/>
<dbReference type="eggNOG" id="ENOG502S6TV">
    <property type="taxonomic scope" value="Eukaryota"/>
</dbReference>
<dbReference type="HOGENOM" id="CLU_158825_0_0_1"/>
<dbReference type="InParanoid" id="A7TIN2"/>
<dbReference type="OMA" id="QLRNKDY"/>
<dbReference type="OrthoDB" id="8949486at2759"/>
<dbReference type="PhylomeDB" id="A7TIN2"/>
<dbReference type="Proteomes" id="UP000000267">
    <property type="component" value="Unassembled WGS sequence"/>
</dbReference>
<dbReference type="GO" id="GO:0034274">
    <property type="term" value="C:Atg12-Atg5-Atg16 complex"/>
    <property type="evidence" value="ECO:0007669"/>
    <property type="project" value="EnsemblFungi"/>
</dbReference>
<dbReference type="GO" id="GO:0061908">
    <property type="term" value="C:phagophore"/>
    <property type="evidence" value="ECO:0007669"/>
    <property type="project" value="EnsemblFungi"/>
</dbReference>
<dbReference type="GO" id="GO:0034045">
    <property type="term" value="C:phagophore assembly site membrane"/>
    <property type="evidence" value="ECO:0007669"/>
    <property type="project" value="UniProtKB-SubCell"/>
</dbReference>
<dbReference type="GO" id="GO:0120095">
    <property type="term" value="C:vacuole-isolation membrane contact site"/>
    <property type="evidence" value="ECO:0007669"/>
    <property type="project" value="EnsemblFungi"/>
</dbReference>
<dbReference type="GO" id="GO:0019776">
    <property type="term" value="F:Atg8-family ligase activity"/>
    <property type="evidence" value="ECO:0007669"/>
    <property type="project" value="EnsemblFungi"/>
</dbReference>
<dbReference type="GO" id="GO:0042802">
    <property type="term" value="F:identical protein binding"/>
    <property type="evidence" value="ECO:0007669"/>
    <property type="project" value="EnsemblFungi"/>
</dbReference>
<dbReference type="GO" id="GO:0030674">
    <property type="term" value="F:protein-macromolecule adaptor activity"/>
    <property type="evidence" value="ECO:0007669"/>
    <property type="project" value="EnsemblFungi"/>
</dbReference>
<dbReference type="GO" id="GO:1905037">
    <property type="term" value="P:autophagosome organization"/>
    <property type="evidence" value="ECO:0007669"/>
    <property type="project" value="EnsemblFungi"/>
</dbReference>
<dbReference type="GO" id="GO:0000422">
    <property type="term" value="P:autophagy of mitochondrion"/>
    <property type="evidence" value="ECO:0007669"/>
    <property type="project" value="EnsemblFungi"/>
</dbReference>
<dbReference type="GO" id="GO:0032258">
    <property type="term" value="P:cytoplasm to vacuole targeting by the Cvt pathway"/>
    <property type="evidence" value="ECO:0007669"/>
    <property type="project" value="EnsemblFungi"/>
</dbReference>
<dbReference type="GO" id="GO:0034727">
    <property type="term" value="P:piecemeal microautophagy of the nucleus"/>
    <property type="evidence" value="ECO:0007669"/>
    <property type="project" value="EnsemblFungi"/>
</dbReference>
<dbReference type="CDD" id="cd22887">
    <property type="entry name" value="Atg16_CCD"/>
    <property type="match status" value="1"/>
</dbReference>
<dbReference type="Gene3D" id="1.20.5.170">
    <property type="match status" value="1"/>
</dbReference>
<dbReference type="InterPro" id="IPR013923">
    <property type="entry name" value="Autophagy-rel_prot_16_dom"/>
</dbReference>
<dbReference type="Pfam" id="PF08614">
    <property type="entry name" value="ATG16"/>
    <property type="match status" value="1"/>
</dbReference>
<proteinExistence type="inferred from homology"/>
<sequence>MDSLFVERLAQRDEVEGRFCELFKEVQIMVGPQLEDESMERKLIVALKSDLVEKDLRIGELEEILQLRNKDYERLNDELISLNIENNILRDKLQNMTEENSKLVKRWLNKVQQEADAMNENLH</sequence>
<evidence type="ECO:0000250" key="1"/>
<evidence type="ECO:0000250" key="2">
    <source>
        <dbReference type="UniProtKB" id="Q03818"/>
    </source>
</evidence>
<evidence type="ECO:0000255" key="3"/>
<evidence type="ECO:0000305" key="4"/>
<keyword id="KW-0072">Autophagy</keyword>
<keyword id="KW-0175">Coiled coil</keyword>
<keyword id="KW-0472">Membrane</keyword>
<keyword id="KW-0653">Protein transport</keyword>
<keyword id="KW-1185">Reference proteome</keyword>
<keyword id="KW-0813">Transport</keyword>
<name>ATG16_VANPO</name>
<comment type="function">
    <text evidence="1">Stabilizes the ATG5-ATG12 conjugate which is necessary for autophagy. The ATG5-ATG12/ATG16 complex is required for efficient promotion of ATG8-conjugation to phosphatidylethanolamine and ATG8 localization to the pre-autophagosomal structure (PAS). Also recruits ATG3 to the PAS. Involved in endoplasmic reticulum-specific autophagic process and is essential for the survival of cells subjected to severe ER stress (By similarity).</text>
</comment>
<comment type="subunit">
    <text evidence="1">Homodimer (By similarity). Part of the ATG5-ATG12/ATG16 complex. Several units of each may be present in this complex (By similarity).</text>
</comment>
<comment type="subcellular location">
    <subcellularLocation>
        <location evidence="2">Preautophagosomal structure membrane</location>
        <topology evidence="2">Peripheral membrane protein</topology>
    </subcellularLocation>
</comment>
<comment type="similarity">
    <text evidence="4">Belongs to the ATG16 family.</text>
</comment>
<feature type="chain" id="PRO_0000317977" description="Autophagy-related protein 16">
    <location>
        <begin position="1"/>
        <end position="123"/>
    </location>
</feature>
<feature type="coiled-coil region" evidence="3">
    <location>
        <begin position="57"/>
        <end position="106"/>
    </location>
</feature>
<organism>
    <name type="scientific">Vanderwaltozyma polyspora (strain ATCC 22028 / DSM 70294 / BCRC 21397 / CBS 2163 / NBRC 10782 / NRRL Y-8283 / UCD 57-17)</name>
    <name type="common">Kluyveromyces polysporus</name>
    <dbReference type="NCBI Taxonomy" id="436907"/>
    <lineage>
        <taxon>Eukaryota</taxon>
        <taxon>Fungi</taxon>
        <taxon>Dikarya</taxon>
        <taxon>Ascomycota</taxon>
        <taxon>Saccharomycotina</taxon>
        <taxon>Saccharomycetes</taxon>
        <taxon>Saccharomycetales</taxon>
        <taxon>Saccharomycetaceae</taxon>
        <taxon>Vanderwaltozyma</taxon>
    </lineage>
</organism>
<gene>
    <name type="primary">ATG16</name>
    <name type="ORF">Kpol_1043p14</name>
</gene>